<feature type="chain" id="PRO_0000308354" description="Potassium voltage-gated channel subfamily V member 1">
    <location>
        <begin position="1"/>
        <end position="500"/>
    </location>
</feature>
<feature type="topological domain" description="Cytoplasmic" evidence="2">
    <location>
        <begin position="1"/>
        <end position="210"/>
    </location>
</feature>
<feature type="transmembrane region" description="Helical; Name=Segment S1" evidence="2">
    <location>
        <begin position="211"/>
        <end position="231"/>
    </location>
</feature>
<feature type="topological domain" description="Extracellular" evidence="2">
    <location>
        <begin position="232"/>
        <end position="238"/>
    </location>
</feature>
<feature type="transmembrane region" description="Helical; Name=Segment S2" evidence="2">
    <location>
        <begin position="239"/>
        <end position="259"/>
    </location>
</feature>
<feature type="topological domain" description="Cytoplasmic" evidence="2">
    <location>
        <begin position="260"/>
        <end position="276"/>
    </location>
</feature>
<feature type="transmembrane region" description="Helical; Name=Segment S3" evidence="2">
    <location>
        <begin position="277"/>
        <end position="297"/>
    </location>
</feature>
<feature type="topological domain" description="Extracellular" evidence="2">
    <location>
        <begin position="298"/>
        <end position="309"/>
    </location>
</feature>
<feature type="transmembrane region" description="Helical; Voltage-sensor; Name=Segment S4" evidence="2">
    <location>
        <begin position="310"/>
        <end position="331"/>
    </location>
</feature>
<feature type="topological domain" description="Cytoplasmic" evidence="2">
    <location>
        <begin position="332"/>
        <end position="345"/>
    </location>
</feature>
<feature type="transmembrane region" description="Helical; Name=Segment S5" evidence="2">
    <location>
        <begin position="346"/>
        <end position="366"/>
    </location>
</feature>
<feature type="transmembrane region" description="Helical; Name=Segment S6" evidence="2">
    <location>
        <begin position="407"/>
        <end position="427"/>
    </location>
</feature>
<feature type="topological domain" description="Cytoplasmic" evidence="2">
    <location>
        <begin position="428"/>
        <end position="500"/>
    </location>
</feature>
<feature type="region of interest" description="Disordered" evidence="3">
    <location>
        <begin position="168"/>
        <end position="189"/>
    </location>
</feature>
<feature type="short sequence motif" description="Selectivity filter" evidence="1">
    <location>
        <begin position="392"/>
        <end position="397"/>
    </location>
</feature>
<feature type="compositionally biased region" description="Basic and acidic residues" evidence="3">
    <location>
        <begin position="168"/>
        <end position="181"/>
    </location>
</feature>
<dbReference type="EMBL" id="CR858472">
    <property type="protein sequence ID" value="CAH90700.1"/>
    <property type="molecule type" value="mRNA"/>
</dbReference>
<dbReference type="RefSeq" id="NP_001125386.1">
    <property type="nucleotide sequence ID" value="NM_001131914.1"/>
</dbReference>
<dbReference type="RefSeq" id="XP_009242310.1">
    <property type="nucleotide sequence ID" value="XM_009244035.1"/>
</dbReference>
<dbReference type="SMR" id="Q5RC10"/>
<dbReference type="FunCoup" id="Q5RC10">
    <property type="interactions" value="30"/>
</dbReference>
<dbReference type="STRING" id="9601.ENSPPYP00000021123"/>
<dbReference type="Ensembl" id="ENSPPYT00000021966.2">
    <property type="protein sequence ID" value="ENSPPYP00000021123.1"/>
    <property type="gene ID" value="ENSPPYG00000018827.2"/>
</dbReference>
<dbReference type="GeneID" id="100172291"/>
<dbReference type="KEGG" id="pon:100172291"/>
<dbReference type="CTD" id="27012"/>
<dbReference type="eggNOG" id="KOG3713">
    <property type="taxonomic scope" value="Eukaryota"/>
</dbReference>
<dbReference type="GeneTree" id="ENSGT00940000159740"/>
<dbReference type="HOGENOM" id="CLU_011722_4_1_1"/>
<dbReference type="InParanoid" id="Q5RC10"/>
<dbReference type="OMA" id="SGGDEFW"/>
<dbReference type="OrthoDB" id="296522at2759"/>
<dbReference type="TreeFam" id="TF313103"/>
<dbReference type="Proteomes" id="UP000001595">
    <property type="component" value="Chromosome 8"/>
</dbReference>
<dbReference type="GO" id="GO:0045171">
    <property type="term" value="C:intercellular bridge"/>
    <property type="evidence" value="ECO:0007669"/>
    <property type="project" value="Ensembl"/>
</dbReference>
<dbReference type="GO" id="GO:0008076">
    <property type="term" value="C:voltage-gated potassium channel complex"/>
    <property type="evidence" value="ECO:0007669"/>
    <property type="project" value="InterPro"/>
</dbReference>
<dbReference type="GO" id="GO:0005249">
    <property type="term" value="F:voltage-gated potassium channel activity"/>
    <property type="evidence" value="ECO:0007669"/>
    <property type="project" value="InterPro"/>
</dbReference>
<dbReference type="GO" id="GO:0001508">
    <property type="term" value="P:action potential"/>
    <property type="evidence" value="ECO:0007669"/>
    <property type="project" value="TreeGrafter"/>
</dbReference>
<dbReference type="GO" id="GO:0051260">
    <property type="term" value="P:protein homooligomerization"/>
    <property type="evidence" value="ECO:0007669"/>
    <property type="project" value="InterPro"/>
</dbReference>
<dbReference type="FunFam" id="1.10.287.70:FF:000005">
    <property type="entry name" value="potassium voltage-gated channel subfamily G member 1"/>
    <property type="match status" value="1"/>
</dbReference>
<dbReference type="FunFam" id="1.20.120.350:FF:000044">
    <property type="entry name" value="Potassium voltage-gated channel subfamily V member 1"/>
    <property type="match status" value="1"/>
</dbReference>
<dbReference type="FunFam" id="3.30.710.10:FF:000067">
    <property type="entry name" value="Potassium voltage-gated channel subfamily V member 1"/>
    <property type="match status" value="1"/>
</dbReference>
<dbReference type="Gene3D" id="1.10.287.70">
    <property type="match status" value="1"/>
</dbReference>
<dbReference type="Gene3D" id="3.30.710.10">
    <property type="entry name" value="Potassium Channel Kv1.1, Chain A"/>
    <property type="match status" value="1"/>
</dbReference>
<dbReference type="Gene3D" id="1.20.120.350">
    <property type="entry name" value="Voltage-gated potassium channels. Chain C"/>
    <property type="match status" value="1"/>
</dbReference>
<dbReference type="InterPro" id="IPR000210">
    <property type="entry name" value="BTB/POZ_dom"/>
</dbReference>
<dbReference type="InterPro" id="IPR005821">
    <property type="entry name" value="Ion_trans_dom"/>
</dbReference>
<dbReference type="InterPro" id="IPR003968">
    <property type="entry name" value="K_chnl_volt-dep_Kv"/>
</dbReference>
<dbReference type="InterPro" id="IPR003970">
    <property type="entry name" value="K_chnl_volt-dep_Kv8.1"/>
</dbReference>
<dbReference type="InterPro" id="IPR011333">
    <property type="entry name" value="SKP1/BTB/POZ_sf"/>
</dbReference>
<dbReference type="InterPro" id="IPR003131">
    <property type="entry name" value="T1-type_BTB"/>
</dbReference>
<dbReference type="InterPro" id="IPR028325">
    <property type="entry name" value="VG_K_chnl"/>
</dbReference>
<dbReference type="InterPro" id="IPR027359">
    <property type="entry name" value="Volt_channel_dom_sf"/>
</dbReference>
<dbReference type="PANTHER" id="PTHR11537:SF38">
    <property type="entry name" value="POTASSIUM VOLTAGE-GATED CHANNEL SUBFAMILY V MEMBER 1"/>
    <property type="match status" value="1"/>
</dbReference>
<dbReference type="PANTHER" id="PTHR11537">
    <property type="entry name" value="VOLTAGE-GATED POTASSIUM CHANNEL"/>
    <property type="match status" value="1"/>
</dbReference>
<dbReference type="Pfam" id="PF02214">
    <property type="entry name" value="BTB_2"/>
    <property type="match status" value="1"/>
</dbReference>
<dbReference type="Pfam" id="PF00520">
    <property type="entry name" value="Ion_trans"/>
    <property type="match status" value="1"/>
</dbReference>
<dbReference type="PRINTS" id="PR00169">
    <property type="entry name" value="KCHANNEL"/>
</dbReference>
<dbReference type="PRINTS" id="PR01493">
    <property type="entry name" value="KV8CHANNEL"/>
</dbReference>
<dbReference type="PRINTS" id="PR01491">
    <property type="entry name" value="KVCHANNEL"/>
</dbReference>
<dbReference type="SMART" id="SM00225">
    <property type="entry name" value="BTB"/>
    <property type="match status" value="1"/>
</dbReference>
<dbReference type="SUPFAM" id="SSF54695">
    <property type="entry name" value="POZ domain"/>
    <property type="match status" value="1"/>
</dbReference>
<dbReference type="SUPFAM" id="SSF81324">
    <property type="entry name" value="Voltage-gated potassium channels"/>
    <property type="match status" value="1"/>
</dbReference>
<protein>
    <recommendedName>
        <fullName>Potassium voltage-gated channel subfamily V member 1</fullName>
    </recommendedName>
    <alternativeName>
        <fullName>Voltage-gated potassium channel subunit Kv8.1</fullName>
    </alternativeName>
</protein>
<gene>
    <name type="primary">KCNV1</name>
</gene>
<organism>
    <name type="scientific">Pongo abelii</name>
    <name type="common">Sumatran orangutan</name>
    <name type="synonym">Pongo pygmaeus abelii</name>
    <dbReference type="NCBI Taxonomy" id="9601"/>
    <lineage>
        <taxon>Eukaryota</taxon>
        <taxon>Metazoa</taxon>
        <taxon>Chordata</taxon>
        <taxon>Craniata</taxon>
        <taxon>Vertebrata</taxon>
        <taxon>Euteleostomi</taxon>
        <taxon>Mammalia</taxon>
        <taxon>Eutheria</taxon>
        <taxon>Euarchontoglires</taxon>
        <taxon>Primates</taxon>
        <taxon>Haplorrhini</taxon>
        <taxon>Catarrhini</taxon>
        <taxon>Hominidae</taxon>
        <taxon>Pongo</taxon>
    </lineage>
</organism>
<reference key="1">
    <citation type="submission" date="2004-11" db="EMBL/GenBank/DDBJ databases">
        <authorList>
            <consortium name="The German cDNA consortium"/>
        </authorList>
    </citation>
    <scope>NUCLEOTIDE SEQUENCE [LARGE SCALE MRNA]</scope>
    <source>
        <tissue>Brain cortex</tissue>
    </source>
</reference>
<keyword id="KW-1003">Cell membrane</keyword>
<keyword id="KW-0407">Ion channel</keyword>
<keyword id="KW-0406">Ion transport</keyword>
<keyword id="KW-0472">Membrane</keyword>
<keyword id="KW-0630">Potassium</keyword>
<keyword id="KW-0631">Potassium channel</keyword>
<keyword id="KW-0633">Potassium transport</keyword>
<keyword id="KW-1185">Reference proteome</keyword>
<keyword id="KW-0812">Transmembrane</keyword>
<keyword id="KW-1133">Transmembrane helix</keyword>
<keyword id="KW-0813">Transport</keyword>
<keyword id="KW-0851">Voltage-gated channel</keyword>
<comment type="function">
    <text evidence="1">Potassium channel subunit that does not form functional channels by itself. Modulates KCNB1 and KCNB2 channel activity by shifting the threshold for inactivation to more negative values and by slowing the rate of inactivation. Can down-regulate the channel activity of KCNB1, KCNB2, KCNC4 and KCND1, possibly by trapping them in intracellular membranes (By similarity).</text>
</comment>
<comment type="subunit">
    <text evidence="1">Heteromultimer with KCNB1 and KCNB2. Interacts with KCNC4 and KCND1 (By similarity).</text>
</comment>
<comment type="subcellular location">
    <subcellularLocation>
        <location evidence="1">Cell membrane</location>
        <topology evidence="1">Multi-pass membrane protein</topology>
    </subcellularLocation>
    <text evidence="1">Has to be associated with another potassium channel subunit to get inserted in the plasma membrane. Remains intracellular in the absence of KCNB2 (By similarity).</text>
</comment>
<comment type="domain">
    <text evidence="1">The segment S4 is probably the voltage-sensor and is characterized by a series of positively charged amino acids at every third position.</text>
</comment>
<comment type="similarity">
    <text evidence="4">Belongs to the potassium channel family. V (TC 1.A.1.2) subfamily. Kv8.1/KCNV1 sub-subfamily.</text>
</comment>
<proteinExistence type="evidence at transcript level"/>
<evidence type="ECO:0000250" key="1"/>
<evidence type="ECO:0000255" key="2"/>
<evidence type="ECO:0000256" key="3">
    <source>
        <dbReference type="SAM" id="MobiDB-lite"/>
    </source>
</evidence>
<evidence type="ECO:0000305" key="4"/>
<accession>Q5RC10</accession>
<name>KCNV1_PONAB</name>
<sequence length="500" mass="56304">MPSSGRALLDSPLDSGSLTSLDSSVFCSEGEGEPLALGDCFTVNVGGSRFVLSQQALSCFPHTRLGKLAVVVASYRRPGALAAVPSPLELCDDANPVDNEYFFDRSSQAFRYVLHYYRTGRLHVMEQLCALSFLQEIQYWGIDELSIDSCCRDRYFRRKELSETLDFKKDTEDQESQHESEQDFSQGPCPTVRQKLWNILEKPGSSTAARIFGVISIIFVVVSIINMALMSAELSWLDLQLLEILEYVCISWFTGEFVLRFLCVRDRCRFLRKVPNIIDLLAILPFYITLLVESLSGSQTTQELENVGRIVQVLRLLRALRMLKLGRHSTGLRSLGMTITQCYEEVGLLLLFLSVGISIFSTVEYFAEQSIPDTTFTSVPCAWWWATTSMTTVGYGDIRPDTTTGKIVAFMCILSGILVLALPIAIINDRFSACYFTLKLKEAAVRQREALKKLTKNIATDSYISVNLRDVYARSIMEMLRLKGRERASTRSSGGDDFWF</sequence>